<sequence length="161" mass="18179">MPSFDIVSEVDKQEVRNAIDQVNKEVGTRFDFKGSDARVEQADYTLTVFADDEFKLDQVFDILTTKLAKRNVDVRSLDKGQVEKISGNKVKQLVTVKTGVESELAKKIIRLIKDSKLKVQGSIQGETVRVSGAKRDTLQEAIQLVKKSVTDFPLQFQNFRD</sequence>
<protein>
    <recommendedName>
        <fullName evidence="1">Nucleotide-binding protein Nmul_A1044</fullName>
    </recommendedName>
</protein>
<dbReference type="EMBL" id="CP000103">
    <property type="protein sequence ID" value="ABB74347.1"/>
    <property type="molecule type" value="Genomic_DNA"/>
</dbReference>
<dbReference type="RefSeq" id="WP_011380392.1">
    <property type="nucleotide sequence ID" value="NC_007614.1"/>
</dbReference>
<dbReference type="SMR" id="Q2YA74"/>
<dbReference type="STRING" id="323848.Nmul_A1044"/>
<dbReference type="KEGG" id="nmu:Nmul_A1044"/>
<dbReference type="eggNOG" id="COG1666">
    <property type="taxonomic scope" value="Bacteria"/>
</dbReference>
<dbReference type="HOGENOM" id="CLU_099839_1_0_4"/>
<dbReference type="OrthoDB" id="9801447at2"/>
<dbReference type="Proteomes" id="UP000002718">
    <property type="component" value="Chromosome"/>
</dbReference>
<dbReference type="GO" id="GO:0005829">
    <property type="term" value="C:cytosol"/>
    <property type="evidence" value="ECO:0007669"/>
    <property type="project" value="TreeGrafter"/>
</dbReference>
<dbReference type="GO" id="GO:0000166">
    <property type="term" value="F:nucleotide binding"/>
    <property type="evidence" value="ECO:0007669"/>
    <property type="project" value="TreeGrafter"/>
</dbReference>
<dbReference type="CDD" id="cd11740">
    <property type="entry name" value="YajQ_like"/>
    <property type="match status" value="1"/>
</dbReference>
<dbReference type="Gene3D" id="3.30.70.990">
    <property type="entry name" value="YajQ-like, domain 2"/>
    <property type="match status" value="1"/>
</dbReference>
<dbReference type="HAMAP" id="MF_00632">
    <property type="entry name" value="YajQ"/>
    <property type="match status" value="1"/>
</dbReference>
<dbReference type="InterPro" id="IPR007551">
    <property type="entry name" value="DUF520"/>
</dbReference>
<dbReference type="InterPro" id="IPR035570">
    <property type="entry name" value="UPF0234_N"/>
</dbReference>
<dbReference type="InterPro" id="IPR036183">
    <property type="entry name" value="YajQ-like_sf"/>
</dbReference>
<dbReference type="NCBIfam" id="NF003819">
    <property type="entry name" value="PRK05412.1"/>
    <property type="match status" value="1"/>
</dbReference>
<dbReference type="PANTHER" id="PTHR30476">
    <property type="entry name" value="UPF0234 PROTEIN YAJQ"/>
    <property type="match status" value="1"/>
</dbReference>
<dbReference type="PANTHER" id="PTHR30476:SF0">
    <property type="entry name" value="UPF0234 PROTEIN YAJQ"/>
    <property type="match status" value="1"/>
</dbReference>
<dbReference type="Pfam" id="PF04461">
    <property type="entry name" value="DUF520"/>
    <property type="match status" value="1"/>
</dbReference>
<dbReference type="SUPFAM" id="SSF89963">
    <property type="entry name" value="YajQ-like"/>
    <property type="match status" value="2"/>
</dbReference>
<organism>
    <name type="scientific">Nitrosospira multiformis (strain ATCC 25196 / NCIMB 11849 / C 71)</name>
    <dbReference type="NCBI Taxonomy" id="323848"/>
    <lineage>
        <taxon>Bacteria</taxon>
        <taxon>Pseudomonadati</taxon>
        <taxon>Pseudomonadota</taxon>
        <taxon>Betaproteobacteria</taxon>
        <taxon>Nitrosomonadales</taxon>
        <taxon>Nitrosomonadaceae</taxon>
        <taxon>Nitrosospira</taxon>
    </lineage>
</organism>
<gene>
    <name type="ordered locus">Nmul_A1044</name>
</gene>
<accession>Q2YA74</accession>
<reference key="1">
    <citation type="submission" date="2005-08" db="EMBL/GenBank/DDBJ databases">
        <title>Complete sequence of chromosome 1 of Nitrosospira multiformis ATCC 25196.</title>
        <authorList>
            <person name="Copeland A."/>
            <person name="Lucas S."/>
            <person name="Lapidus A."/>
            <person name="Barry K."/>
            <person name="Detter J.C."/>
            <person name="Glavina T."/>
            <person name="Hammon N."/>
            <person name="Israni S."/>
            <person name="Pitluck S."/>
            <person name="Chain P."/>
            <person name="Malfatti S."/>
            <person name="Shin M."/>
            <person name="Vergez L."/>
            <person name="Schmutz J."/>
            <person name="Larimer F."/>
            <person name="Land M."/>
            <person name="Hauser L."/>
            <person name="Kyrpides N."/>
            <person name="Lykidis A."/>
            <person name="Richardson P."/>
        </authorList>
    </citation>
    <scope>NUCLEOTIDE SEQUENCE [LARGE SCALE GENOMIC DNA]</scope>
    <source>
        <strain>ATCC 25196 / NCIMB 11849 / C 71</strain>
    </source>
</reference>
<comment type="function">
    <text evidence="1">Nucleotide-binding protein.</text>
</comment>
<comment type="similarity">
    <text evidence="1">Belongs to the YajQ family.</text>
</comment>
<feature type="chain" id="PRO_0000261954" description="Nucleotide-binding protein Nmul_A1044">
    <location>
        <begin position="1"/>
        <end position="161"/>
    </location>
</feature>
<name>Y1044_NITMU</name>
<proteinExistence type="inferred from homology"/>
<evidence type="ECO:0000255" key="1">
    <source>
        <dbReference type="HAMAP-Rule" id="MF_00632"/>
    </source>
</evidence>
<keyword id="KW-0547">Nucleotide-binding</keyword>
<keyword id="KW-1185">Reference proteome</keyword>